<dbReference type="EC" id="2.7.7.8" evidence="1"/>
<dbReference type="EMBL" id="CP000248">
    <property type="protein sequence ID" value="ABD26918.1"/>
    <property type="molecule type" value="Genomic_DNA"/>
</dbReference>
<dbReference type="RefSeq" id="WP_011446124.1">
    <property type="nucleotide sequence ID" value="NC_007794.1"/>
</dbReference>
<dbReference type="SMR" id="Q2G5F5"/>
<dbReference type="STRING" id="279238.Saro_2482"/>
<dbReference type="KEGG" id="nar:Saro_2482"/>
<dbReference type="eggNOG" id="COG1185">
    <property type="taxonomic scope" value="Bacteria"/>
</dbReference>
<dbReference type="HOGENOM" id="CLU_004217_2_2_5"/>
<dbReference type="Proteomes" id="UP000009134">
    <property type="component" value="Chromosome"/>
</dbReference>
<dbReference type="GO" id="GO:0005829">
    <property type="term" value="C:cytosol"/>
    <property type="evidence" value="ECO:0007669"/>
    <property type="project" value="TreeGrafter"/>
</dbReference>
<dbReference type="GO" id="GO:0000175">
    <property type="term" value="F:3'-5'-RNA exonuclease activity"/>
    <property type="evidence" value="ECO:0007669"/>
    <property type="project" value="TreeGrafter"/>
</dbReference>
<dbReference type="GO" id="GO:0000287">
    <property type="term" value="F:magnesium ion binding"/>
    <property type="evidence" value="ECO:0007669"/>
    <property type="project" value="UniProtKB-UniRule"/>
</dbReference>
<dbReference type="GO" id="GO:0004654">
    <property type="term" value="F:polyribonucleotide nucleotidyltransferase activity"/>
    <property type="evidence" value="ECO:0007669"/>
    <property type="project" value="UniProtKB-UniRule"/>
</dbReference>
<dbReference type="GO" id="GO:0003723">
    <property type="term" value="F:RNA binding"/>
    <property type="evidence" value="ECO:0007669"/>
    <property type="project" value="UniProtKB-UniRule"/>
</dbReference>
<dbReference type="GO" id="GO:0006402">
    <property type="term" value="P:mRNA catabolic process"/>
    <property type="evidence" value="ECO:0007669"/>
    <property type="project" value="UniProtKB-UniRule"/>
</dbReference>
<dbReference type="GO" id="GO:0006396">
    <property type="term" value="P:RNA processing"/>
    <property type="evidence" value="ECO:0007669"/>
    <property type="project" value="InterPro"/>
</dbReference>
<dbReference type="CDD" id="cd02393">
    <property type="entry name" value="KH-I_PNPase"/>
    <property type="match status" value="1"/>
</dbReference>
<dbReference type="CDD" id="cd11363">
    <property type="entry name" value="RNase_PH_PNPase_1"/>
    <property type="match status" value="1"/>
</dbReference>
<dbReference type="CDD" id="cd11364">
    <property type="entry name" value="RNase_PH_PNPase_2"/>
    <property type="match status" value="1"/>
</dbReference>
<dbReference type="CDD" id="cd04472">
    <property type="entry name" value="S1_PNPase"/>
    <property type="match status" value="1"/>
</dbReference>
<dbReference type="FunFam" id="2.40.50.140:FF:000107">
    <property type="entry name" value="Polyribonucleotide nucleotidyltransferase"/>
    <property type="match status" value="1"/>
</dbReference>
<dbReference type="FunFam" id="3.30.1370.10:FF:000001">
    <property type="entry name" value="Polyribonucleotide nucleotidyltransferase"/>
    <property type="match status" value="1"/>
</dbReference>
<dbReference type="FunFam" id="3.30.230.70:FF:000001">
    <property type="entry name" value="Polyribonucleotide nucleotidyltransferase"/>
    <property type="match status" value="1"/>
</dbReference>
<dbReference type="FunFam" id="3.30.230.70:FF:000002">
    <property type="entry name" value="Polyribonucleotide nucleotidyltransferase"/>
    <property type="match status" value="1"/>
</dbReference>
<dbReference type="Gene3D" id="3.30.230.70">
    <property type="entry name" value="GHMP Kinase, N-terminal domain"/>
    <property type="match status" value="2"/>
</dbReference>
<dbReference type="Gene3D" id="3.30.1370.10">
    <property type="entry name" value="K Homology domain, type 1"/>
    <property type="match status" value="1"/>
</dbReference>
<dbReference type="Gene3D" id="2.40.50.140">
    <property type="entry name" value="Nucleic acid-binding proteins"/>
    <property type="match status" value="1"/>
</dbReference>
<dbReference type="HAMAP" id="MF_01595">
    <property type="entry name" value="PNPase"/>
    <property type="match status" value="1"/>
</dbReference>
<dbReference type="InterPro" id="IPR001247">
    <property type="entry name" value="ExoRNase_PH_dom1"/>
</dbReference>
<dbReference type="InterPro" id="IPR015847">
    <property type="entry name" value="ExoRNase_PH_dom2"/>
</dbReference>
<dbReference type="InterPro" id="IPR036345">
    <property type="entry name" value="ExoRNase_PH_dom2_sf"/>
</dbReference>
<dbReference type="InterPro" id="IPR004087">
    <property type="entry name" value="KH_dom"/>
</dbReference>
<dbReference type="InterPro" id="IPR004088">
    <property type="entry name" value="KH_dom_type_1"/>
</dbReference>
<dbReference type="InterPro" id="IPR036612">
    <property type="entry name" value="KH_dom_type_1_sf"/>
</dbReference>
<dbReference type="InterPro" id="IPR012340">
    <property type="entry name" value="NA-bd_OB-fold"/>
</dbReference>
<dbReference type="InterPro" id="IPR012162">
    <property type="entry name" value="PNPase"/>
</dbReference>
<dbReference type="InterPro" id="IPR027408">
    <property type="entry name" value="PNPase/RNase_PH_dom_sf"/>
</dbReference>
<dbReference type="InterPro" id="IPR015848">
    <property type="entry name" value="PNPase_PH_RNA-bd_bac/org-type"/>
</dbReference>
<dbReference type="InterPro" id="IPR036456">
    <property type="entry name" value="PNPase_PH_RNA-bd_sf"/>
</dbReference>
<dbReference type="InterPro" id="IPR020568">
    <property type="entry name" value="Ribosomal_Su5_D2-typ_SF"/>
</dbReference>
<dbReference type="InterPro" id="IPR003029">
    <property type="entry name" value="S1_domain"/>
</dbReference>
<dbReference type="NCBIfam" id="TIGR03591">
    <property type="entry name" value="polynuc_phos"/>
    <property type="match status" value="1"/>
</dbReference>
<dbReference type="NCBIfam" id="NF008805">
    <property type="entry name" value="PRK11824.1"/>
    <property type="match status" value="1"/>
</dbReference>
<dbReference type="PANTHER" id="PTHR11252">
    <property type="entry name" value="POLYRIBONUCLEOTIDE NUCLEOTIDYLTRANSFERASE"/>
    <property type="match status" value="1"/>
</dbReference>
<dbReference type="PANTHER" id="PTHR11252:SF0">
    <property type="entry name" value="POLYRIBONUCLEOTIDE NUCLEOTIDYLTRANSFERASE 1, MITOCHONDRIAL"/>
    <property type="match status" value="1"/>
</dbReference>
<dbReference type="Pfam" id="PF00013">
    <property type="entry name" value="KH_1"/>
    <property type="match status" value="1"/>
</dbReference>
<dbReference type="Pfam" id="PF03726">
    <property type="entry name" value="PNPase"/>
    <property type="match status" value="1"/>
</dbReference>
<dbReference type="Pfam" id="PF01138">
    <property type="entry name" value="RNase_PH"/>
    <property type="match status" value="2"/>
</dbReference>
<dbReference type="Pfam" id="PF03725">
    <property type="entry name" value="RNase_PH_C"/>
    <property type="match status" value="2"/>
</dbReference>
<dbReference type="Pfam" id="PF00575">
    <property type="entry name" value="S1"/>
    <property type="match status" value="1"/>
</dbReference>
<dbReference type="PIRSF" id="PIRSF005499">
    <property type="entry name" value="PNPase"/>
    <property type="match status" value="1"/>
</dbReference>
<dbReference type="SMART" id="SM00322">
    <property type="entry name" value="KH"/>
    <property type="match status" value="1"/>
</dbReference>
<dbReference type="SMART" id="SM00316">
    <property type="entry name" value="S1"/>
    <property type="match status" value="1"/>
</dbReference>
<dbReference type="SUPFAM" id="SSF54791">
    <property type="entry name" value="Eukaryotic type KH-domain (KH-domain type I)"/>
    <property type="match status" value="1"/>
</dbReference>
<dbReference type="SUPFAM" id="SSF50249">
    <property type="entry name" value="Nucleic acid-binding proteins"/>
    <property type="match status" value="1"/>
</dbReference>
<dbReference type="SUPFAM" id="SSF46915">
    <property type="entry name" value="Polynucleotide phosphorylase/guanosine pentaphosphate synthase (PNPase/GPSI), domain 3"/>
    <property type="match status" value="1"/>
</dbReference>
<dbReference type="SUPFAM" id="SSF55666">
    <property type="entry name" value="Ribonuclease PH domain 2-like"/>
    <property type="match status" value="2"/>
</dbReference>
<dbReference type="SUPFAM" id="SSF54211">
    <property type="entry name" value="Ribosomal protein S5 domain 2-like"/>
    <property type="match status" value="2"/>
</dbReference>
<dbReference type="PROSITE" id="PS50084">
    <property type="entry name" value="KH_TYPE_1"/>
    <property type="match status" value="1"/>
</dbReference>
<dbReference type="PROSITE" id="PS50126">
    <property type="entry name" value="S1"/>
    <property type="match status" value="1"/>
</dbReference>
<keyword id="KW-0963">Cytoplasm</keyword>
<keyword id="KW-0460">Magnesium</keyword>
<keyword id="KW-0479">Metal-binding</keyword>
<keyword id="KW-0548">Nucleotidyltransferase</keyword>
<keyword id="KW-1185">Reference proteome</keyword>
<keyword id="KW-0694">RNA-binding</keyword>
<keyword id="KW-0808">Transferase</keyword>
<organism>
    <name type="scientific">Novosphingobium aromaticivorans (strain ATCC 700278 / DSM 12444 / CCUG 56034 / CIP 105152 / NBRC 16084 / F199)</name>
    <dbReference type="NCBI Taxonomy" id="279238"/>
    <lineage>
        <taxon>Bacteria</taxon>
        <taxon>Pseudomonadati</taxon>
        <taxon>Pseudomonadota</taxon>
        <taxon>Alphaproteobacteria</taxon>
        <taxon>Sphingomonadales</taxon>
        <taxon>Sphingomonadaceae</taxon>
        <taxon>Novosphingobium</taxon>
    </lineage>
</organism>
<proteinExistence type="inferred from homology"/>
<protein>
    <recommendedName>
        <fullName evidence="1">Polyribonucleotide nucleotidyltransferase</fullName>
        <ecNumber evidence="1">2.7.7.8</ecNumber>
    </recommendedName>
    <alternativeName>
        <fullName evidence="1">Polynucleotide phosphorylase</fullName>
        <shortName evidence="1">PNPase</shortName>
    </alternativeName>
</protein>
<gene>
    <name evidence="1" type="primary">pnp</name>
    <name type="ordered locus">Saro_2482</name>
</gene>
<name>PNP_NOVAD</name>
<comment type="function">
    <text evidence="1">Involved in mRNA degradation. Catalyzes the phosphorolysis of single-stranded polyribonucleotides processively in the 3'- to 5'-direction.</text>
</comment>
<comment type="catalytic activity">
    <reaction evidence="1">
        <text>RNA(n+1) + phosphate = RNA(n) + a ribonucleoside 5'-diphosphate</text>
        <dbReference type="Rhea" id="RHEA:22096"/>
        <dbReference type="Rhea" id="RHEA-COMP:14527"/>
        <dbReference type="Rhea" id="RHEA-COMP:17342"/>
        <dbReference type="ChEBI" id="CHEBI:43474"/>
        <dbReference type="ChEBI" id="CHEBI:57930"/>
        <dbReference type="ChEBI" id="CHEBI:140395"/>
        <dbReference type="EC" id="2.7.7.8"/>
    </reaction>
</comment>
<comment type="cofactor">
    <cofactor evidence="1">
        <name>Mg(2+)</name>
        <dbReference type="ChEBI" id="CHEBI:18420"/>
    </cofactor>
</comment>
<comment type="subcellular location">
    <subcellularLocation>
        <location evidence="1">Cytoplasm</location>
    </subcellularLocation>
</comment>
<comment type="similarity">
    <text evidence="1">Belongs to the polyribonucleotide nucleotidyltransferase family.</text>
</comment>
<reference key="1">
    <citation type="submission" date="2006-01" db="EMBL/GenBank/DDBJ databases">
        <title>Complete sequence of Novosphingobium aromaticivorans DSM 12444.</title>
        <authorList>
            <consortium name="US DOE Joint Genome Institute"/>
            <person name="Copeland A."/>
            <person name="Lucas S."/>
            <person name="Lapidus A."/>
            <person name="Barry K."/>
            <person name="Detter J.C."/>
            <person name="Glavina T."/>
            <person name="Hammon N."/>
            <person name="Israni S."/>
            <person name="Pitluck S."/>
            <person name="Chain P."/>
            <person name="Malfatti S."/>
            <person name="Shin M."/>
            <person name="Vergez L."/>
            <person name="Schmutz J."/>
            <person name="Larimer F."/>
            <person name="Land M."/>
            <person name="Kyrpides N."/>
            <person name="Ivanova N."/>
            <person name="Fredrickson J."/>
            <person name="Balkwill D."/>
            <person name="Romine M.F."/>
            <person name="Richardson P."/>
        </authorList>
    </citation>
    <scope>NUCLEOTIDE SEQUENCE [LARGE SCALE GENOMIC DNA]</scope>
    <source>
        <strain>ATCC 700278 / DSM 12444 / CCUG 56034 / CIP 105152 / NBRC 16084 / F199</strain>
    </source>
</reference>
<sequence length="772" mass="83936">MFDVKTVSLEWGGKTLTLETGRIARQADGAVLATYGETVVLCAVTAAKSVKEGQDFFPLTVHYQEKYSAAGRIPGGFFKRERGATEKETLVSRLIDRPVRPLFPEGFYNEINVIAQVLSYDGETEPDIVAMIAASAALTISGVPFMGPIAAARVGFIEGEYVLNPKQDVALADGRLDLVVAATDTAVMMVESEAKELSEDEMLGAVLFAHDEIKKVIGAIIQLAEKAAKDPWDIDLSDNTADIKKKLKDLVGKDVAAAYKLTDKSARSNALNEARAKAKAAFAEEGAQTQMVAMKTMKKVEADIVRGAILKDGQRIDGRTTTQVRPIEAIVGFLPRTHGSSLFTRGETQAICTTTLGTKDAEQMIDGLEGLRYENFMLHYNFPPYSVGEVGRFGAPGRREVGHGKLAWRALHPVLPTKEEFPYTIRILSDITESNGSSSMATVCGGCLSMMDAGVPVKRPVSGIAMGLILEGDKFAVLSDILGDEDHLGDMDFKVAGTSEGITTMQMDIKVAGITREIFEVALRQASEGRAHILGEMTKALGEARTELSAHAPRIETLQIDKSKIRDVIGTGGKVIREIVATTGAKVDIDDEGLIKISSSDLTQIEAAKNWILGIVEEAEVGKIYKGKVVNIVDFGAFVNFMGGKDGLVHVSEMKNERVEKPTDVVKEGQDVYVKVLEIDQRGKVRLSMRVVDQETGAELEDTRPPREPREPRGDRGDRGDRGDRRGPRGDRGPRREGGDRGPRREGGDRPRRDRDDGPAPDHMPAFLKSDD</sequence>
<accession>Q2G5F5</accession>
<feature type="chain" id="PRO_0000329742" description="Polyribonucleotide nucleotidyltransferase">
    <location>
        <begin position="1"/>
        <end position="772"/>
    </location>
</feature>
<feature type="domain" description="KH" evidence="1">
    <location>
        <begin position="553"/>
        <end position="612"/>
    </location>
</feature>
<feature type="domain" description="S1 motif" evidence="1">
    <location>
        <begin position="622"/>
        <end position="690"/>
    </location>
</feature>
<feature type="region of interest" description="Disordered" evidence="2">
    <location>
        <begin position="695"/>
        <end position="772"/>
    </location>
</feature>
<feature type="compositionally biased region" description="Basic and acidic residues" evidence="2">
    <location>
        <begin position="701"/>
        <end position="760"/>
    </location>
</feature>
<feature type="binding site" evidence="1">
    <location>
        <position position="486"/>
    </location>
    <ligand>
        <name>Mg(2+)</name>
        <dbReference type="ChEBI" id="CHEBI:18420"/>
    </ligand>
</feature>
<feature type="binding site" evidence="1">
    <location>
        <position position="492"/>
    </location>
    <ligand>
        <name>Mg(2+)</name>
        <dbReference type="ChEBI" id="CHEBI:18420"/>
    </ligand>
</feature>
<evidence type="ECO:0000255" key="1">
    <source>
        <dbReference type="HAMAP-Rule" id="MF_01595"/>
    </source>
</evidence>
<evidence type="ECO:0000256" key="2">
    <source>
        <dbReference type="SAM" id="MobiDB-lite"/>
    </source>
</evidence>